<sequence>MKKILALLVIAPLLVSCSGNKNQVENEVFVKDTNGFEILMGQFAHNIENIWGLKEVLIAGPKDYVKYTDQYQTRSHINFDAGTITIETIATTNPAAHLRQAIITTLLMGDDPGSIDLYSDVNDIQISKEPFLYGQVLDNNGEPIRWEWRAAHFADYLLQNKMQTRTSGLHVISFVTIQLVPNHLDKRAHKYLPLVRKSAARYGVEESLILAIMQTESSFNPYAVSRSDALGLMQVVQHTAGKDVFKLKGKSGQPSRSYLFDPENNIDAGTAYLSILQNTYLGGIQNATSRRYAVITSYNGGAGSVLRVFHSDKNKAVGIINTMSPGDVFQTLTTKHPSGESRRYLVKVNSAQKNYRRY</sequence>
<feature type="signal peptide" evidence="1">
    <location>
        <begin position="1"/>
        <end position="16"/>
    </location>
</feature>
<feature type="chain" id="PRO_1000069481" description="Membrane-bound lytic murein transglycosylase C">
    <location>
        <begin position="17"/>
        <end position="358"/>
    </location>
</feature>
<feature type="lipid moiety-binding region" description="N-palmitoyl cysteine" evidence="1">
    <location>
        <position position="17"/>
    </location>
</feature>
<feature type="lipid moiety-binding region" description="S-diacylglycerol cysteine" evidence="1">
    <location>
        <position position="17"/>
    </location>
</feature>
<comment type="function">
    <text evidence="1">Murein-degrading enzyme. May play a role in recycling of muropeptides during cell elongation and/or cell division.</text>
</comment>
<comment type="catalytic activity">
    <reaction evidence="1">
        <text>Exolytic cleavage of the (1-&gt;4)-beta-glycosidic linkage between N-acetylmuramic acid (MurNAc) and N-acetylglucosamine (GlcNAc) residues in peptidoglycan, from either the reducing or the non-reducing ends of the peptidoglycan chains, with concomitant formation of a 1,6-anhydrobond in the MurNAc residue.</text>
        <dbReference type="EC" id="4.2.2.n1"/>
    </reaction>
</comment>
<comment type="subcellular location">
    <subcellularLocation>
        <location evidence="1">Cell outer membrane</location>
        <topology evidence="1">Lipid-anchor</topology>
    </subcellularLocation>
</comment>
<comment type="similarity">
    <text evidence="1">Belongs to the transglycosylase Slt family.</text>
</comment>
<organism>
    <name type="scientific">Yersinia pseudotuberculosis serotype O:1b (strain IP 31758)</name>
    <dbReference type="NCBI Taxonomy" id="349747"/>
    <lineage>
        <taxon>Bacteria</taxon>
        <taxon>Pseudomonadati</taxon>
        <taxon>Pseudomonadota</taxon>
        <taxon>Gammaproteobacteria</taxon>
        <taxon>Enterobacterales</taxon>
        <taxon>Yersiniaceae</taxon>
        <taxon>Yersinia</taxon>
    </lineage>
</organism>
<reference key="1">
    <citation type="journal article" date="2007" name="PLoS Genet.">
        <title>The complete genome sequence of Yersinia pseudotuberculosis IP31758, the causative agent of Far East scarlet-like fever.</title>
        <authorList>
            <person name="Eppinger M."/>
            <person name="Rosovitz M.J."/>
            <person name="Fricke W.F."/>
            <person name="Rasko D.A."/>
            <person name="Kokorina G."/>
            <person name="Fayolle C."/>
            <person name="Lindler L.E."/>
            <person name="Carniel E."/>
            <person name="Ravel J."/>
        </authorList>
    </citation>
    <scope>NUCLEOTIDE SEQUENCE [LARGE SCALE GENOMIC DNA]</scope>
    <source>
        <strain>IP 31758</strain>
    </source>
</reference>
<gene>
    <name evidence="1" type="primary">mltC</name>
    <name type="ordered locus">YpsIP31758_0817</name>
</gene>
<evidence type="ECO:0000255" key="1">
    <source>
        <dbReference type="HAMAP-Rule" id="MF_01616"/>
    </source>
</evidence>
<proteinExistence type="inferred from homology"/>
<protein>
    <recommendedName>
        <fullName evidence="1">Membrane-bound lytic murein transglycosylase C</fullName>
        <ecNumber evidence="1">4.2.2.n1</ecNumber>
    </recommendedName>
    <alternativeName>
        <fullName evidence="1">Murein lyase C</fullName>
    </alternativeName>
</protein>
<dbReference type="EC" id="4.2.2.n1" evidence="1"/>
<dbReference type="EMBL" id="CP000720">
    <property type="protein sequence ID" value="ABS49420.1"/>
    <property type="molecule type" value="Genomic_DNA"/>
</dbReference>
<dbReference type="RefSeq" id="WP_002209995.1">
    <property type="nucleotide sequence ID" value="NC_009708.1"/>
</dbReference>
<dbReference type="SMR" id="A7FEX3"/>
<dbReference type="CAZy" id="GH23">
    <property type="family name" value="Glycoside Hydrolase Family 23"/>
</dbReference>
<dbReference type="GeneID" id="57973687"/>
<dbReference type="KEGG" id="ypi:YpsIP31758_0817"/>
<dbReference type="HOGENOM" id="CLU_044583_0_0_6"/>
<dbReference type="Proteomes" id="UP000002412">
    <property type="component" value="Chromosome"/>
</dbReference>
<dbReference type="GO" id="GO:0009279">
    <property type="term" value="C:cell outer membrane"/>
    <property type="evidence" value="ECO:0007669"/>
    <property type="project" value="UniProtKB-SubCell"/>
</dbReference>
<dbReference type="GO" id="GO:0016798">
    <property type="term" value="F:hydrolase activity, acting on glycosyl bonds"/>
    <property type="evidence" value="ECO:0007669"/>
    <property type="project" value="InterPro"/>
</dbReference>
<dbReference type="GO" id="GO:0008933">
    <property type="term" value="F:peptidoglycan lytic transglycosylase activity"/>
    <property type="evidence" value="ECO:0007669"/>
    <property type="project" value="UniProtKB-UniRule"/>
</dbReference>
<dbReference type="GO" id="GO:0016998">
    <property type="term" value="P:cell wall macromolecule catabolic process"/>
    <property type="evidence" value="ECO:0007669"/>
    <property type="project" value="UniProtKB-UniRule"/>
</dbReference>
<dbReference type="GO" id="GO:0071555">
    <property type="term" value="P:cell wall organization"/>
    <property type="evidence" value="ECO:0007669"/>
    <property type="project" value="UniProtKB-KW"/>
</dbReference>
<dbReference type="GO" id="GO:0000270">
    <property type="term" value="P:peptidoglycan metabolic process"/>
    <property type="evidence" value="ECO:0007669"/>
    <property type="project" value="InterPro"/>
</dbReference>
<dbReference type="CDD" id="cd16893">
    <property type="entry name" value="LT_MltC_MltE"/>
    <property type="match status" value="1"/>
</dbReference>
<dbReference type="FunFam" id="1.10.530.10:FF:000002">
    <property type="entry name" value="Membrane-bound lytic murein transglycosylase C"/>
    <property type="match status" value="1"/>
</dbReference>
<dbReference type="Gene3D" id="1.10.530.10">
    <property type="match status" value="1"/>
</dbReference>
<dbReference type="HAMAP" id="MF_01616">
    <property type="entry name" value="MltC"/>
    <property type="match status" value="1"/>
</dbReference>
<dbReference type="InterPro" id="IPR023346">
    <property type="entry name" value="Lysozyme-like_dom_sf"/>
</dbReference>
<dbReference type="InterPro" id="IPR023664">
    <property type="entry name" value="Murein_transglycosylaseC"/>
</dbReference>
<dbReference type="InterPro" id="IPR024570">
    <property type="entry name" value="Murein_transglycosylaseC_N"/>
</dbReference>
<dbReference type="InterPro" id="IPR000189">
    <property type="entry name" value="Transglyc_AS"/>
</dbReference>
<dbReference type="InterPro" id="IPR008258">
    <property type="entry name" value="Transglycosylase_SLT_dom_1"/>
</dbReference>
<dbReference type="NCBIfam" id="NF008670">
    <property type="entry name" value="PRK11671.1"/>
    <property type="match status" value="1"/>
</dbReference>
<dbReference type="PANTHER" id="PTHR37423:SF2">
    <property type="entry name" value="MEMBRANE-BOUND LYTIC MUREIN TRANSGLYCOSYLASE C"/>
    <property type="match status" value="1"/>
</dbReference>
<dbReference type="PANTHER" id="PTHR37423">
    <property type="entry name" value="SOLUBLE LYTIC MUREIN TRANSGLYCOSYLASE-RELATED"/>
    <property type="match status" value="1"/>
</dbReference>
<dbReference type="Pfam" id="PF11873">
    <property type="entry name" value="Mltc_N"/>
    <property type="match status" value="1"/>
</dbReference>
<dbReference type="Pfam" id="PF01464">
    <property type="entry name" value="SLT"/>
    <property type="match status" value="1"/>
</dbReference>
<dbReference type="SUPFAM" id="SSF53955">
    <property type="entry name" value="Lysozyme-like"/>
    <property type="match status" value="1"/>
</dbReference>
<dbReference type="PROSITE" id="PS51257">
    <property type="entry name" value="PROKAR_LIPOPROTEIN"/>
    <property type="match status" value="1"/>
</dbReference>
<dbReference type="PROSITE" id="PS00922">
    <property type="entry name" value="TRANSGLYCOSYLASE"/>
    <property type="match status" value="1"/>
</dbReference>
<accession>A7FEX3</accession>
<keyword id="KW-0998">Cell outer membrane</keyword>
<keyword id="KW-0961">Cell wall biogenesis/degradation</keyword>
<keyword id="KW-0449">Lipoprotein</keyword>
<keyword id="KW-0456">Lyase</keyword>
<keyword id="KW-0472">Membrane</keyword>
<keyword id="KW-0564">Palmitate</keyword>
<keyword id="KW-0732">Signal</keyword>
<name>MLTC_YERP3</name>